<feature type="chain" id="PRO_0000306867" description="Pleckstrin homology domain-containing family A member 8">
    <location>
        <begin position="1"/>
        <end position="549"/>
    </location>
</feature>
<feature type="domain" description="PH" evidence="2">
    <location>
        <begin position="1"/>
        <end position="93"/>
    </location>
</feature>
<feature type="region of interest" description="Disordered" evidence="3">
    <location>
        <begin position="180"/>
        <end position="245"/>
    </location>
</feature>
<feature type="region of interest" description="Disordered" evidence="3">
    <location>
        <begin position="257"/>
        <end position="312"/>
    </location>
</feature>
<feature type="compositionally biased region" description="Basic and acidic residues" evidence="3">
    <location>
        <begin position="203"/>
        <end position="219"/>
    </location>
</feature>
<feature type="compositionally biased region" description="Acidic residues" evidence="3">
    <location>
        <begin position="276"/>
        <end position="288"/>
    </location>
</feature>
<feature type="compositionally biased region" description="Polar residues" evidence="3">
    <location>
        <begin position="299"/>
        <end position="309"/>
    </location>
</feature>
<evidence type="ECO:0000250" key="1"/>
<evidence type="ECO:0000255" key="2">
    <source>
        <dbReference type="PROSITE-ProRule" id="PRU00145"/>
    </source>
</evidence>
<evidence type="ECO:0000256" key="3">
    <source>
        <dbReference type="SAM" id="MobiDB-lite"/>
    </source>
</evidence>
<name>PKHA8_DANRE</name>
<sequence>MEGVLYKWTNYISGWQPRWFVLEGGTLSYYDSQEDAWKGCKGSIKISVCEIQVHPSDFTRVDLIIPGEQYFYLRAINAAERQKWLVALGTAKACLTDNRTKREKELQENSEALKTKMSELRLYCDLLLQQVNKIQESPLAETSAGSGEGGDETGNLVKSTCTTFLKTLEECMHIASRTFNPDLLSRTPPGSPSVATIKPQKIKSNDPKNLHPGETRKDLINTSGTSAHESGPDNEPPPSPQENISTAHTESGLMEDQNDLIEPNNGSSSSTQDHEEPVEEQQTDGSTEDADHSQEEQQEVSMSPTQNKQEVQEDIQTDLELNETQSENKQEEEDEDKVDTFFSTMSHRFSDIILEEDSGIPTQAFLDSCYAIVPVLDKLGPTVFAPVKIDFVGNIKKIQQKVVSDPESFPTLQSIVLHEVKTEVAQVRNSATEALLWLKRGLKFLKEFLSEINTGVKDVQGALYNAYGKTLRQYHGWVVRGVFALALRAAPSYEGFMAALVSYEGDELKEGFRTGMHRDLDIYLPAMENQLSILDTLYEEYGLESDEIV</sequence>
<organism>
    <name type="scientific">Danio rerio</name>
    <name type="common">Zebrafish</name>
    <name type="synonym">Brachydanio rerio</name>
    <dbReference type="NCBI Taxonomy" id="7955"/>
    <lineage>
        <taxon>Eukaryota</taxon>
        <taxon>Metazoa</taxon>
        <taxon>Chordata</taxon>
        <taxon>Craniata</taxon>
        <taxon>Vertebrata</taxon>
        <taxon>Euteleostomi</taxon>
        <taxon>Actinopterygii</taxon>
        <taxon>Neopterygii</taxon>
        <taxon>Teleostei</taxon>
        <taxon>Ostariophysi</taxon>
        <taxon>Cypriniformes</taxon>
        <taxon>Danionidae</taxon>
        <taxon>Danioninae</taxon>
        <taxon>Danio</taxon>
    </lineage>
</organism>
<accession>Q5U3N0</accession>
<dbReference type="EMBL" id="BC085465">
    <property type="protein sequence ID" value="AAH85465.1"/>
    <property type="molecule type" value="mRNA"/>
</dbReference>
<dbReference type="RefSeq" id="NP_001007375.1">
    <property type="nucleotide sequence ID" value="NM_001007374.1"/>
</dbReference>
<dbReference type="SMR" id="Q5U3N0"/>
<dbReference type="FunCoup" id="Q5U3N0">
    <property type="interactions" value="1057"/>
</dbReference>
<dbReference type="STRING" id="7955.ENSDARP00000059622"/>
<dbReference type="PaxDb" id="7955-ENSDARP00000059622"/>
<dbReference type="GeneID" id="492502"/>
<dbReference type="KEGG" id="dre:492502"/>
<dbReference type="AGR" id="ZFIN:ZDB-GENE-041114-69"/>
<dbReference type="CTD" id="84725"/>
<dbReference type="ZFIN" id="ZDB-GENE-041114-69">
    <property type="gene designation" value="plekha8"/>
</dbReference>
<dbReference type="eggNOG" id="KOG3221">
    <property type="taxonomic scope" value="Eukaryota"/>
</dbReference>
<dbReference type="InParanoid" id="Q5U3N0"/>
<dbReference type="OrthoDB" id="1854502at2759"/>
<dbReference type="PhylomeDB" id="Q5U3N0"/>
<dbReference type="Reactome" id="R-DRE-1660499">
    <property type="pathway name" value="Synthesis of PIPs at the plasma membrane"/>
</dbReference>
<dbReference type="Reactome" id="R-DRE-9845576">
    <property type="pathway name" value="Glycosphingolipid transport"/>
</dbReference>
<dbReference type="PRO" id="PR:Q5U3N0"/>
<dbReference type="Proteomes" id="UP000000437">
    <property type="component" value="Chromosome 16"/>
</dbReference>
<dbReference type="GO" id="GO:0005829">
    <property type="term" value="C:cytosol"/>
    <property type="evidence" value="ECO:0000318"/>
    <property type="project" value="GO_Central"/>
</dbReference>
<dbReference type="GO" id="GO:0005794">
    <property type="term" value="C:Golgi apparatus"/>
    <property type="evidence" value="ECO:0007669"/>
    <property type="project" value="UniProtKB-SubCell"/>
</dbReference>
<dbReference type="GO" id="GO:0016020">
    <property type="term" value="C:membrane"/>
    <property type="evidence" value="ECO:0007669"/>
    <property type="project" value="UniProtKB-SubCell"/>
</dbReference>
<dbReference type="GO" id="GO:1902387">
    <property type="term" value="F:ceramide 1-phosphate binding"/>
    <property type="evidence" value="ECO:0000318"/>
    <property type="project" value="GO_Central"/>
</dbReference>
<dbReference type="GO" id="GO:1902388">
    <property type="term" value="F:ceramide 1-phosphate transfer activity"/>
    <property type="evidence" value="ECO:0000318"/>
    <property type="project" value="GO_Central"/>
</dbReference>
<dbReference type="GO" id="GO:0035627">
    <property type="term" value="P:ceramide transport"/>
    <property type="evidence" value="ECO:0000318"/>
    <property type="project" value="GO_Central"/>
</dbReference>
<dbReference type="GO" id="GO:0120009">
    <property type="term" value="P:intermembrane lipid transfer"/>
    <property type="evidence" value="ECO:0000318"/>
    <property type="project" value="GO_Central"/>
</dbReference>
<dbReference type="GO" id="GO:0015031">
    <property type="term" value="P:protein transport"/>
    <property type="evidence" value="ECO:0007669"/>
    <property type="project" value="UniProtKB-KW"/>
</dbReference>
<dbReference type="CDD" id="cd01247">
    <property type="entry name" value="PH_FAPP1_FAPP2"/>
    <property type="match status" value="1"/>
</dbReference>
<dbReference type="FunFam" id="1.10.3520.10:FF:000001">
    <property type="entry name" value="Pleckstrin domain-containing family A member 8"/>
    <property type="match status" value="1"/>
</dbReference>
<dbReference type="FunFam" id="2.30.29.30:FF:000085">
    <property type="entry name" value="Pleckstrin homology domain-containing family A member 8"/>
    <property type="match status" value="1"/>
</dbReference>
<dbReference type="Gene3D" id="1.10.3520.10">
    <property type="entry name" value="Glycolipid transfer protein"/>
    <property type="match status" value="1"/>
</dbReference>
<dbReference type="Gene3D" id="2.30.29.30">
    <property type="entry name" value="Pleckstrin-homology domain (PH domain)/Phosphotyrosine-binding domain (PTB)"/>
    <property type="match status" value="1"/>
</dbReference>
<dbReference type="InterPro" id="IPR036497">
    <property type="entry name" value="GLTP_sf"/>
</dbReference>
<dbReference type="InterPro" id="IPR014830">
    <property type="entry name" value="Glycolipid_transfer_prot_dom"/>
</dbReference>
<dbReference type="InterPro" id="IPR011993">
    <property type="entry name" value="PH-like_dom_sf"/>
</dbReference>
<dbReference type="InterPro" id="IPR001849">
    <property type="entry name" value="PH_domain"/>
</dbReference>
<dbReference type="PANTHER" id="PTHR10219">
    <property type="entry name" value="GLYCOLIPID TRANSFER PROTEIN-RELATED"/>
    <property type="match status" value="1"/>
</dbReference>
<dbReference type="PANTHER" id="PTHR10219:SF25">
    <property type="entry name" value="PLECKSTRIN HOMOLOGY DOMAIN-CONTAINING FAMILY A MEMBER 8"/>
    <property type="match status" value="1"/>
</dbReference>
<dbReference type="Pfam" id="PF08718">
    <property type="entry name" value="GLTP"/>
    <property type="match status" value="1"/>
</dbReference>
<dbReference type="Pfam" id="PF00169">
    <property type="entry name" value="PH"/>
    <property type="match status" value="1"/>
</dbReference>
<dbReference type="SMART" id="SM00233">
    <property type="entry name" value="PH"/>
    <property type="match status" value="1"/>
</dbReference>
<dbReference type="SUPFAM" id="SSF110004">
    <property type="entry name" value="Glycolipid transfer protein, GLTP"/>
    <property type="match status" value="1"/>
</dbReference>
<dbReference type="SUPFAM" id="SSF50729">
    <property type="entry name" value="PH domain-like"/>
    <property type="match status" value="1"/>
</dbReference>
<dbReference type="PROSITE" id="PS50003">
    <property type="entry name" value="PH_DOMAIN"/>
    <property type="match status" value="1"/>
</dbReference>
<proteinExistence type="evidence at transcript level"/>
<protein>
    <recommendedName>
        <fullName>Pleckstrin homology domain-containing family A member 8</fullName>
        <shortName>PH domain-containing family A member 8</shortName>
    </recommendedName>
</protein>
<keyword id="KW-0963">Cytoplasm</keyword>
<keyword id="KW-0333">Golgi apparatus</keyword>
<keyword id="KW-0472">Membrane</keyword>
<keyword id="KW-0653">Protein transport</keyword>
<keyword id="KW-1185">Reference proteome</keyword>
<keyword id="KW-0813">Transport</keyword>
<gene>
    <name type="primary">plekha8</name>
    <name type="ORF">zgc:101886</name>
</gene>
<reference key="1">
    <citation type="submission" date="2004-11" db="EMBL/GenBank/DDBJ databases">
        <authorList>
            <consortium name="NIH - Zebrafish Gene Collection (ZGC) project"/>
        </authorList>
    </citation>
    <scope>NUCLEOTIDE SEQUENCE [LARGE SCALE MRNA]</scope>
    <source>
        <tissue>Larva</tissue>
    </source>
</reference>
<comment type="function">
    <text evidence="1">Cargo transport protein that is required for apical transport from the trans-Golgi network (TGN) to the plasma membrane.</text>
</comment>
<comment type="subcellular location">
    <subcellularLocation>
        <location evidence="1">Cytoplasm</location>
    </subcellularLocation>
    <subcellularLocation>
        <location evidence="1">Golgi apparatus</location>
        <location evidence="1">trans-Golgi network membrane</location>
    </subcellularLocation>
    <subcellularLocation>
        <location evidence="1">Membrane</location>
        <topology evidence="1">Peripheral membrane protein</topology>
    </subcellularLocation>
    <text evidence="1">Mainly localized to the trans-Golgi network (TGN) but also found at the rims of Golgi cisternae.</text>
</comment>